<accession>Q2F7J1</accession>
<organism>
    <name type="scientific">Xenotropic MuLV-related virus (isolate VP35)</name>
    <name type="common">XMRV</name>
    <dbReference type="NCBI Taxonomy" id="356663"/>
    <lineage>
        <taxon>Viruses</taxon>
        <taxon>Riboviria</taxon>
        <taxon>Pararnavirae</taxon>
        <taxon>Artverviricota</taxon>
        <taxon>Revtraviricetes</taxon>
        <taxon>Ortervirales</taxon>
        <taxon>Retroviridae</taxon>
        <taxon>Orthoretrovirinae</taxon>
        <taxon>Gammaretrovirus</taxon>
        <taxon>Murine leukemia-related retroviruses</taxon>
    </lineage>
</organism>
<proteinExistence type="inferred from homology"/>
<sequence>MESPAFSKPLKDKINPWGPLIIMGILVRAGASVQRDSPHQVFNVTWKITNLMTGQTANATSLLGTMTDTFPKLYFDLCDLVGDNWDDPEPDIGDGCRSPGGRKRTRLYDFYVCPGHTVLTGCGGPREGYCGKWGCETTGQAYWKPSSSWDLISLKRGNTPKGQGPCFDSSVGSGSIQGATPGGRCNPLVLEFTDAGKRASWDAPKTWGLRLYRSTGADPVTLFSLTRQVLNVGPRVPIGPNPVITEQLPPSQPVQIMLPRPPRPPPSGAASMVPGAPPPSQQPGTGDRLLNLVEGAYQALNLTSPDKTQECWLCLVSGPPYYEGVAVLGTYSNHTSAPANCSVTSQHKLTLSEVTGQGLCIGAVPKTHQALCNTTQKTSDGSYYLASPAGTIWACSTGLTPCLSTTVLNLTTDYCVLVELWPKVTYHSPNYVYGQFGKKTKYKREPVSLTLALLLGGLTMGGIAAGVGTGTTALVATKQFEQLQAAIHTDLGALEKSVSALEKSLTSLSEVVLQNRRGLDLLFLKEGGLCAALKKECCFYADHTGVVRDSMAKLRERLNQRQKLFESGQGWFEGLFNRSPWFTTLISTIMGPLIVLLLILLFGPCILNRLVQFVKDRISVVQALVLTQQYHQLKSIDPEEVESRE</sequence>
<name>ENV_XMRV3</name>
<gene>
    <name type="primary">env</name>
</gene>
<reference key="1">
    <citation type="journal article" date="2006" name="PLoS Pathog.">
        <title>Identification of a novel Gammaretrovirus in prostate tumors of patients homozygous for R462Q RNASEL variant.</title>
        <authorList>
            <person name="Urisman A."/>
            <person name="Molinaro R.J."/>
            <person name="Fischer N."/>
            <person name="Plummer S.J."/>
            <person name="Casey G."/>
            <person name="Klein E.A."/>
            <person name="Malathi K."/>
            <person name="Magi-Galluzzi C."/>
            <person name="Tubbs R.R."/>
            <person name="Ganem D."/>
            <person name="Silverman R.H."/>
            <person name="DeRisi J.L."/>
        </authorList>
    </citation>
    <scope>NUCLEOTIDE SEQUENCE [GENOMIC RNA]</scope>
    <scope>RETRACTED PAPER</scope>
</reference>
<reference key="2">
    <citation type="journal article" date="2012" name="PLoS Pathog.">
        <authorList>
            <person name="Urisman A."/>
            <person name="Molinaro R.J."/>
            <person name="Fischer N."/>
            <person name="Plummer S.J."/>
            <person name="Casey G."/>
            <person name="Klein E.A."/>
            <person name="Malathi K."/>
            <person name="Magi-Galluzzi C."/>
            <person name="Tubbs R.R."/>
            <person name="Ganem D."/>
            <person name="Silverman R.H."/>
            <person name="DeRisi J.L."/>
        </authorList>
    </citation>
    <scope>RETRACTION NOTICE OF PUBMED:16609730</scope>
</reference>
<protein>
    <recommendedName>
        <fullName>Envelope glycoprotein</fullName>
    </recommendedName>
    <alternativeName>
        <fullName>Env polyprotein</fullName>
    </alternativeName>
    <component>
        <recommendedName>
            <fullName>Surface protein</fullName>
            <shortName>SU</shortName>
        </recommendedName>
    </component>
    <component>
        <recommendedName>
            <fullName>Transmembrane protein</fullName>
            <shortName>TM</shortName>
        </recommendedName>
    </component>
    <component>
        <recommendedName>
            <fullName>R-peptide</fullName>
        </recommendedName>
    </component>
</protein>
<comment type="function">
    <text evidence="1">The surface protein (SU) attaches the virus to the host cell by binding to its receptor. This interaction activates a thiol in a CXXC motif of the C-terminal domain, where the other Cys residue participates in the formation of the intersubunit disulfide. The activated thiol will attack the disulfide and cause its isomerization into a disulfide isomer within the motif. This leads to SU displacement and TM refolding, and is thought to activate its fusogenic potential by unmasking its fusion peptide. Fusion occurs at the host cell plasma membrane (By similarity).</text>
</comment>
<comment type="function">
    <text evidence="1">The transmembrane protein (TM) acts as a class I viral fusion protein. Under the current model, the protein has at least 3 conformational states: pre-fusion native state, pre-hairpin intermediate state, and post-fusion hairpin state. During viral and target cell membrane fusion, the coiled coil regions (heptad repeats) assume a trimer-of-hairpins structure, positioning the fusion peptide in close proximity to the C-terminal region of the ectodomain. The formation of this structure appears to drive apposition and subsequent fusion of viral and target cell membranes. Membranes fusion leads to delivery of the nucleocapsid into the cytoplasm (By similarity).</text>
</comment>
<comment type="subunit">
    <text evidence="1">The mature envelope protein (Env) consists of a trimer of SU-TM heterodimers attached by a labile interchain disulfide bond. The activated Env consists of SU monomers and TM trimers (By similarity).</text>
</comment>
<comment type="subcellular location">
    <molecule>Transmembrane protein</molecule>
    <subcellularLocation>
        <location evidence="1">Virion membrane</location>
        <topology evidence="1">Single-pass type I membrane protein</topology>
    </subcellularLocation>
    <subcellularLocation>
        <location evidence="1">Host cell membrane</location>
        <topology evidence="1">Single-pass type I membrane protein</topology>
    </subcellularLocation>
</comment>
<comment type="subcellular location">
    <molecule>Surface protein</molecule>
    <subcellularLocation>
        <location>Virion membrane</location>
        <topology>Peripheral membrane protein</topology>
    </subcellularLocation>
    <subcellularLocation>
        <location evidence="1">Host cell membrane</location>
        <topology evidence="1">Peripheral membrane protein</topology>
    </subcellularLocation>
    <text evidence="1">The surface protein is not anchored to the viral envelope, but associates with the virion surface through its binding to TM. Both proteins are thought to be concentrated at the site of budding and incorporated into the virions possibly by contacts between the cytoplasmic tail of Env and the N-terminus of Gag (By similarity).</text>
</comment>
<comment type="subcellular location">
    <molecule>R-peptide</molecule>
    <subcellularLocation>
        <location>Host cell membrane</location>
        <topology>Peripheral membrane protein</topology>
    </subcellularLocation>
    <text evidence="1">The R-peptide is membrane-associated through its palmitate.</text>
</comment>
<comment type="domain">
    <text evidence="1">The 17 amino acids long immunosuppressive region is present in many retroviral envelope proteins. Synthetic peptides derived from this relatively conserved sequence inhibit immune function in vitro and in vivo (By similarity).</text>
</comment>
<comment type="domain">
    <text evidence="1">The YXXL motif is involved in determining the exact site of viral release at the surface of infected mononuclear cells and promotes endocytosis.</text>
</comment>
<comment type="PTM">
    <text evidence="1">Specific enzymatic cleavages in vivo yield mature proteins. Envelope glycoproteins are synthesized as an inactive precursor that is N-glycosylated and processed likely by host cell furin or by a furin-like protease in the Golgi to yield the mature SU and TM proteins. The cleavage site between SU and TM requires the minimal sequence [KR]-X-[KR]-R. The R-peptide is released from the C-terminus of the cytoplasmic tail of the TM protein upon particle formation as a result of proteolytic cleavage by the viral protease. Cleavage of this peptide is required for TM to become fusogenic (By similarity).</text>
</comment>
<comment type="PTM">
    <text evidence="1">The CXXC motif is highly conserved across a broad range of retroviral envelope proteins. It is thought to participate in the formation of a labile disulfide bond possibly with the CX6CC motif present in the transmembrane protein. Isomerization of the intersubunit disulfide bond to an SU intrachain disulfide bond is thought to occur upon receptor recognition in order to allow membrane fusion (By similarity).</text>
</comment>
<comment type="PTM">
    <text evidence="1">The transmembrane protein is palmitoylated.</text>
</comment>
<comment type="PTM">
    <text>The R-peptide is palmitoylated.</text>
</comment>
<comment type="caution">
    <text evidence="4 5">Originally thought to be characterized from prostate tumors, the described gammaretrovirus XMRV is in fact laboratory-derived and there is no association of XMRV with prostate cancer.</text>
</comment>
<evidence type="ECO:0000250" key="1"/>
<evidence type="ECO:0000255" key="2"/>
<evidence type="ECO:0000256" key="3">
    <source>
        <dbReference type="SAM" id="MobiDB-lite"/>
    </source>
</evidence>
<evidence type="ECO:0000305" key="4">
    <source>
    </source>
</evidence>
<evidence type="ECO:0000305" key="5">
    <source>
    </source>
</evidence>
<organismHost>
    <name type="scientific">Homo sapiens</name>
    <name type="common">Human</name>
    <dbReference type="NCBI Taxonomy" id="9606"/>
</organismHost>
<feature type="signal peptide" evidence="2">
    <location>
        <begin position="1"/>
        <end position="33"/>
    </location>
</feature>
<feature type="chain" id="PRO_0000390823" description="Envelope glycoprotein" evidence="1">
    <location>
        <begin position="34"/>
        <end position="645"/>
    </location>
</feature>
<feature type="chain" id="PRO_0000390824" description="Surface protein" evidence="1">
    <location>
        <begin position="34"/>
        <end position="444"/>
    </location>
</feature>
<feature type="chain" id="PRO_0000390825" description="Transmembrane protein" evidence="1">
    <location>
        <begin position="445"/>
        <end position="645"/>
    </location>
</feature>
<feature type="peptide" id="PRO_0000390826" description="R-peptide" evidence="1">
    <location>
        <begin position="625"/>
        <end position="645"/>
    </location>
</feature>
<feature type="topological domain" description="Extracellular" evidence="2">
    <location>
        <begin position="34"/>
        <end position="585"/>
    </location>
</feature>
<feature type="transmembrane region" description="Helical" evidence="2">
    <location>
        <begin position="586"/>
        <end position="606"/>
    </location>
</feature>
<feature type="topological domain" description="Cytoplasmic" evidence="2">
    <location>
        <begin position="607"/>
        <end position="640"/>
    </location>
</feature>
<feature type="region of interest" description="Receptor-binding domain (RBD)" evidence="2">
    <location>
        <begin position="32"/>
        <end position="237"/>
    </location>
</feature>
<feature type="region of interest" description="Disordered" evidence="3">
    <location>
        <begin position="259"/>
        <end position="286"/>
    </location>
</feature>
<feature type="region of interest" description="Fusion peptide" evidence="1">
    <location>
        <begin position="447"/>
        <end position="467"/>
    </location>
</feature>
<feature type="region of interest" description="Immunosuppression" evidence="1">
    <location>
        <begin position="513"/>
        <end position="529"/>
    </location>
</feature>
<feature type="coiled-coil region" evidence="2">
    <location>
        <begin position="490"/>
        <end position="510"/>
    </location>
</feature>
<feature type="short sequence motif" description="CXXC" evidence="1">
    <location>
        <begin position="311"/>
        <end position="314"/>
    </location>
</feature>
<feature type="short sequence motif" description="CX6CC" evidence="1">
    <location>
        <begin position="530"/>
        <end position="538"/>
    </location>
</feature>
<feature type="short sequence motif" description="YXXL motif; contains endocytosis signal" evidence="1">
    <location>
        <begin position="630"/>
        <end position="633"/>
    </location>
</feature>
<feature type="site" description="Cleavage; by host" evidence="1">
    <location>
        <begin position="444"/>
        <end position="445"/>
    </location>
</feature>
<feature type="site" description="Cleavage; by viral protease p14" evidence="1">
    <location>
        <begin position="624"/>
        <end position="625"/>
    </location>
</feature>
<feature type="lipid moiety-binding region" description="S-palmitoyl cysteine; by host" evidence="1">
    <location>
        <position position="605"/>
    </location>
</feature>
<feature type="glycosylation site" description="N-linked (GlcNAc...) asparagine; by host" evidence="2">
    <location>
        <position position="43"/>
    </location>
</feature>
<feature type="glycosylation site" description="N-linked (GlcNAc...) asparagine; by host" evidence="2">
    <location>
        <position position="58"/>
    </location>
</feature>
<feature type="glycosylation site" description="N-linked (GlcNAc...) asparagine; by host" evidence="2">
    <location>
        <position position="301"/>
    </location>
</feature>
<feature type="glycosylation site" description="N-linked (GlcNAc...) asparagine; by host" evidence="2">
    <location>
        <position position="333"/>
    </location>
</feature>
<feature type="glycosylation site" description="N-linked (GlcNAc...) asparagine; by host" evidence="2">
    <location>
        <position position="340"/>
    </location>
</feature>
<feature type="glycosylation site" description="N-linked (GlcNAc...) asparagine; by host" evidence="2">
    <location>
        <position position="373"/>
    </location>
</feature>
<feature type="glycosylation site" description="N-linked (GlcNAc...) asparagine; by host" evidence="2">
    <location>
        <position position="409"/>
    </location>
</feature>
<feature type="disulfide bond" evidence="1">
    <location>
        <begin position="113"/>
        <end position="130"/>
    </location>
</feature>
<feature type="disulfide bond" evidence="1">
    <location>
        <begin position="122"/>
        <end position="135"/>
    </location>
</feature>
<feature type="disulfide bond" description="Interchain (between SU and TM chains, or C-314 with C-538); in linked form" evidence="1">
    <location>
        <begin position="311"/>
        <end position="538"/>
    </location>
</feature>
<feature type="disulfide bond" evidence="1">
    <location>
        <begin position="311"/>
        <end position="314"/>
    </location>
</feature>
<feature type="disulfide bond" evidence="1">
    <location>
        <begin position="341"/>
        <end position="395"/>
    </location>
</feature>
<feature type="disulfide bond" evidence="1">
    <location>
        <begin position="360"/>
        <end position="372"/>
    </location>
</feature>
<feature type="disulfide bond" evidence="1">
    <location>
        <begin position="402"/>
        <end position="415"/>
    </location>
</feature>
<feature type="disulfide bond" evidence="1">
    <location>
        <begin position="530"/>
        <end position="537"/>
    </location>
</feature>
<keyword id="KW-0165">Cleavage on pair of basic residues</keyword>
<keyword id="KW-0175">Coiled coil</keyword>
<keyword id="KW-1015">Disulfide bond</keyword>
<keyword id="KW-1169">Fusion of virus membrane with host cell membrane</keyword>
<keyword id="KW-1168">Fusion of virus membrane with host membrane</keyword>
<keyword id="KW-0325">Glycoprotein</keyword>
<keyword id="KW-1032">Host cell membrane</keyword>
<keyword id="KW-1043">Host membrane</keyword>
<keyword id="KW-0945">Host-virus interaction</keyword>
<keyword id="KW-0449">Lipoprotein</keyword>
<keyword id="KW-0472">Membrane</keyword>
<keyword id="KW-0564">Palmitate</keyword>
<keyword id="KW-0732">Signal</keyword>
<keyword id="KW-0812">Transmembrane</keyword>
<keyword id="KW-1133">Transmembrane helix</keyword>
<keyword id="KW-1161">Viral attachment to host cell</keyword>
<keyword id="KW-0261">Viral envelope protein</keyword>
<keyword id="KW-1162">Viral penetration into host cytoplasm</keyword>
<keyword id="KW-0946">Virion</keyword>
<keyword id="KW-1160">Virus entry into host cell</keyword>
<dbReference type="EMBL" id="DQ241301">
    <property type="protein sequence ID" value="ABB83226.1"/>
    <property type="molecule type" value="Genomic_RNA"/>
</dbReference>
<dbReference type="SMR" id="Q2F7J1"/>
<dbReference type="GlyCosmos" id="Q2F7J1">
    <property type="glycosylation" value="7 sites, No reported glycans"/>
</dbReference>
<dbReference type="Proteomes" id="UP000008601">
    <property type="component" value="Genome"/>
</dbReference>
<dbReference type="GO" id="GO:0020002">
    <property type="term" value="C:host cell plasma membrane"/>
    <property type="evidence" value="ECO:0007669"/>
    <property type="project" value="UniProtKB-SubCell"/>
</dbReference>
<dbReference type="GO" id="GO:0016020">
    <property type="term" value="C:membrane"/>
    <property type="evidence" value="ECO:0007669"/>
    <property type="project" value="UniProtKB-KW"/>
</dbReference>
<dbReference type="GO" id="GO:0019031">
    <property type="term" value="C:viral envelope"/>
    <property type="evidence" value="ECO:0007669"/>
    <property type="project" value="UniProtKB-KW"/>
</dbReference>
<dbReference type="GO" id="GO:0055036">
    <property type="term" value="C:virion membrane"/>
    <property type="evidence" value="ECO:0007669"/>
    <property type="project" value="UniProtKB-SubCell"/>
</dbReference>
<dbReference type="GO" id="GO:0019064">
    <property type="term" value="P:fusion of virus membrane with host plasma membrane"/>
    <property type="evidence" value="ECO:0007669"/>
    <property type="project" value="UniProtKB-KW"/>
</dbReference>
<dbReference type="GO" id="GO:0046718">
    <property type="term" value="P:symbiont entry into host cell"/>
    <property type="evidence" value="ECO:0007669"/>
    <property type="project" value="UniProtKB-KW"/>
</dbReference>
<dbReference type="GO" id="GO:0019062">
    <property type="term" value="P:virion attachment to host cell"/>
    <property type="evidence" value="ECO:0007669"/>
    <property type="project" value="UniProtKB-KW"/>
</dbReference>
<dbReference type="CDD" id="cd09851">
    <property type="entry name" value="HTLV-1-like_HR1-HR2"/>
    <property type="match status" value="1"/>
</dbReference>
<dbReference type="Gene3D" id="1.10.287.210">
    <property type="match status" value="1"/>
</dbReference>
<dbReference type="Gene3D" id="3.90.310.10">
    <property type="entry name" value="ENV polyprotein, receptor-binding domain"/>
    <property type="match status" value="1"/>
</dbReference>
<dbReference type="InterPro" id="IPR008981">
    <property type="entry name" value="FMuLV_rcpt-bd"/>
</dbReference>
<dbReference type="InterPro" id="IPR018154">
    <property type="entry name" value="TLV/ENV_coat_polyprotein"/>
</dbReference>
<dbReference type="PANTHER" id="PTHR10424:SF72">
    <property type="entry name" value="BC035947 PROTEIN-RELATED"/>
    <property type="match status" value="1"/>
</dbReference>
<dbReference type="PANTHER" id="PTHR10424">
    <property type="entry name" value="VIRAL ENVELOPE PROTEIN"/>
    <property type="match status" value="1"/>
</dbReference>
<dbReference type="Pfam" id="PF00429">
    <property type="entry name" value="TLV_coat"/>
    <property type="match status" value="1"/>
</dbReference>
<dbReference type="SUPFAM" id="SSF49830">
    <property type="entry name" value="ENV polyprotein, receptor-binding domain"/>
    <property type="match status" value="1"/>
</dbReference>
<dbReference type="SUPFAM" id="SSF58069">
    <property type="entry name" value="Virus ectodomain"/>
    <property type="match status" value="1"/>
</dbReference>